<reference key="1">
    <citation type="journal article" date="1998" name="J. Virol.">
        <title>The genome sequence of herpes simplex virus type 2.</title>
        <authorList>
            <person name="Dolan A."/>
            <person name="Jamieson F.E."/>
            <person name="Cunningham C."/>
            <person name="Barnett B.C."/>
            <person name="McGeoch D.J."/>
        </authorList>
    </citation>
    <scope>NUCLEOTIDE SEQUENCE [LARGE SCALE GENOMIC DNA]</scope>
</reference>
<protein>
    <recommendedName>
        <fullName evidence="2">Large tegument protein deneddylase</fullName>
        <ecNumber evidence="2">3.4.19.12</ecNumber>
        <ecNumber evidence="2">3.4.22.-</ecNumber>
    </recommendedName>
</protein>
<comment type="function">
    <text evidence="2">Large tegument protein that plays multiple roles in the viral cycle. During viral entry, remains associated with the capsid while most of the tegument is detached and participates in the capsid transport toward the host nucleus. Plays a role in the routing of the capsid at the nuclear pore complex and subsequent uncoating. Within the host nucleus, acts as a deneddylase and promotes the degradation of nuclear CRLs (cullin-RING ubiquitin ligases) and thereby stabilizes nuclear CRL substrates, while cytoplasmic CRLs remain unaffected. These modifications prevent host cell cycle S-phase progression and create a favorable environment allowing efficient viral genome replication. Participates later in the secondary envelopment of capsids. Indeed, plays a linker role for the association of the outer viral tegument to the capsids together with the inner tegument protein.</text>
</comment>
<comment type="catalytic activity">
    <reaction evidence="2">
        <text>Thiol-dependent hydrolysis of ester, thioester, amide, peptide and isopeptide bonds formed by the C-terminal Gly of ubiquitin (a 76-residue protein attached to proteins as an intracellular targeting signal).</text>
        <dbReference type="EC" id="3.4.19.12"/>
    </reaction>
</comment>
<comment type="subunit">
    <text evidence="2">Interacts with host CUL1 and CUL4A; these interactions inhibit the E3 ligase activity of cullins. Interacts with inner tegument protein. Interacts with capsid vertex specific component CVC2. Interacts with the major capsid protein/MCP.</text>
</comment>
<comment type="subcellular location">
    <subcellularLocation>
        <location evidence="2">Virion tegument</location>
    </subcellularLocation>
    <subcellularLocation>
        <location evidence="2">Host cytoplasm</location>
    </subcellularLocation>
    <subcellularLocation>
        <location evidence="2">Host nucleus</location>
    </subcellularLocation>
    <text evidence="2">Tightly associated with the capsid.</text>
</comment>
<comment type="PTM">
    <text evidence="1">Proteolytically processed, possibly into several polypeptides. Enzymatic activity is only detectable following cleavage of the UL36 protein, which occurs late during viral replication (By similarity).</text>
</comment>
<comment type="similarity">
    <text evidence="2">Belongs to the herpesviridae large tegument protein family.</text>
</comment>
<organism>
    <name type="scientific">Human herpesvirus 2 (strain HG52)</name>
    <name type="common">HHV-2</name>
    <name type="synonym">Human herpes simplex virus 2</name>
    <dbReference type="NCBI Taxonomy" id="10315"/>
    <lineage>
        <taxon>Viruses</taxon>
        <taxon>Duplodnaviria</taxon>
        <taxon>Heunggongvirae</taxon>
        <taxon>Peploviricota</taxon>
        <taxon>Herviviricetes</taxon>
        <taxon>Herpesvirales</taxon>
        <taxon>Orthoherpesviridae</taxon>
        <taxon>Alphaherpesvirinae</taxon>
        <taxon>Simplexvirus</taxon>
        <taxon>Simplexvirus humanalpha2</taxon>
        <taxon>Human herpesvirus 2</taxon>
    </lineage>
</organism>
<gene>
    <name type="ORF">UL36</name>
</gene>
<evidence type="ECO:0000250" key="1"/>
<evidence type="ECO:0000255" key="2">
    <source>
        <dbReference type="HAMAP-Rule" id="MF_04044"/>
    </source>
</evidence>
<evidence type="ECO:0000256" key="3">
    <source>
        <dbReference type="SAM" id="MobiDB-lite"/>
    </source>
</evidence>
<accession>P89459</accession>
<sequence>MIPAALPHPTMKRQGDRDIVVTGVRNQFATDLEPGGSVSCMRSSLSFLSLLFDVGPRDVLSAEAIEGCLVEGGEWTRAAAGSGPPRMCSIIELPNFLEYPAARGGLRCVFSRVYGEVGFFGEPTAGLLETQCPAHTFFAGPWAMRPLSYTLLTIGPLGMGLYRDGDTAYLFDPHGLPAGTPAFIAKVRAGDVYPYLTYYAHDRPKVRWAGAMVFFVPSGPGAVAPADLTAAALHLYGASETYLQDEPFVERRVAITHPLRGEIGGLGALFVGVVPRGDGEGSGPVVPALPAPTHVQTPGADRPPEAPRGASGPPDTPQAGHPNRPPDDVWAAALEGTPPAKPSAPDAAASGPPHAAPPPQTPAGDAAEEAEDLRVLEVGAVPVGRHRARYSTGLPKRRRPTWTPPSSVEDLTSGERPAPKAPPAKAKKKSAPKKKAPVAAEVPASSPTPIAATVPPAPDTPPQSGQGGGDDGPASPSSPSVLETLGARRPPEPPGADLAQLFEVHPNVAATAVRLAARDAALAREVAACSQLTINALRSPYPAHPGLLELCVIFFFERVLAFLIENGARTHTQAGVAGPAAALLDFTLRMLPRKTAVGDFLASTRMSLADVAAHRPLIQHVLDENSQIGRLALAKLVLVARDVIRETDAFYGDLADLDLQLRAAPPANLYARLGEWLLERSRAHPNTLFAPATPTHPEPLLHRIQALAQFARGEEMRVEAEAREMREALDALARGVDSVSQRAGPLTVMPVPAAPGAGGRAPCPPALGPEAIQARLEDVRIQARRAIESAVKEYFHRGAVYSAKALQASDSHDCRFHVASAAVVPMVQLLESLPAFDQHTRDVAQRAALPPPPPLATSPQAILLRDLLQRGQPLDAPEDLAAWLSVLTDAATQGLIERKPLEELARSIHGINDQQARRSSGLAELQRFDALDAALAQQLDSDAAFVPATGPAPYVDGGGLSPEATRMAEDALRQARAMEAAKMTAELAPEARSRLRERAHALEAMLNDARERAKVAHDAREKFLHKLQGVLRPLPDFVGLKACPAVLATLRASLPAGWTDLADAVRGPPPEVTAALRADLWGLLGQYREALEHPTPDTATALAGLHPAFVVVLKTLFADAPETPVLVQFFSDHAPTIAKAVSNAINAGSAAVATASPAATVDAAVRAHGALADAVSALGAAARDPASPLSFLAVLADSAAGYVKATRLALEARGAIDELTTLGSAAADLVVQARRACAQPEGDHAALIDAAARATTAARESLAGHEAGFGGLLHAEGTAGDHSPSGRALQELGKVIGATRRRADELEAAVADLTAKMAAQRARGSSERWAAGVEAALDRVENRAEFDVVELRRLQALAGTHGYNPRDFRKRAEQALAANAEAVTLALDTAFAFNPYTPENQRHPMLPPLAAIHRLGWSAAFHAAAETYADMFRVDAEPLARLLRIAEGLLEMAQAGDGFIDYHEAVGRLADDMTSVPGLRRYVPFFQHGYADYVELRDRLDAIRADVHRALGGVPLDLAAAAEQISAARNDPEATAELVRTGVTLPCPSEDALVACAAALERVDQSPVKNTAYAEYVAFVTRQDTAETKDAVVRAKQQRAEATERVMAGLREALAARERRAQIEAEGLANLKTMLKVVAVPATVAKTLDQARSVAEIADQVEVLLDQTEKTRELDVPAVIWLEHAQRTFETHPLSAARGDGPGPLARHAGRLGALFDTRRRVDALRRSLEEAEAEWDEVWGRFGRVRGGAWKSPEGFRAMHEQLRALQDTTNTVSGLRAQPAYERLSARYQGVLGAKGAERAEAVEELGARVTKHTALCARLRDEVVRRVPWEMNFDALGGLLAEFDAAAADLAPWAVEEFRGARELIQYRMGLYSAYARAGGQTGAGAESAPAPLLVDLRALDARARASSSPEGHEVDPQLLRRRGEAYLRAGGDPGPLVLREAVSALDLPFATSFLAPDGTPLQYALCFPAVTDKLGALLMRPEAACVRPPLPTDVLESAPTVTAMYVLTVVNRLQLALSDAQAANFQLFGRFVRHRQATWGASMDAAAELYVALVATTLTREFGCRWAQLGWASGAAAPRPPPGPRGSQRHCVAFNENDVLVALVAGVPEHIYNFWRLDLVRQHEYMHLTLERAFEDAAESMLFVQRLTPHPDARIRVLPTFLDGGPPTRGLLFGTRLADWRRGKLSETDPLAPWRSALELGTQRRDVPALGKLSPAQALAAVSVLGRMCLPSAALAALWTCMFPDDYTEYDSFDALLAARLESGQTLGPAGGREASLPEAPHALYRPTGQHVAVLAAATHRTPAARVTAMDLVLAAVLLGAPVVVALRNTTAFSRESELELCLTLFDSRPGGPDAALRDVVSSDIETWAVGLLHTDLNPIENACLAAQLPRLSALIAERPLADGPPCLVLVDISMTPVAVLWEAPEPPGPPDVRFVGSEATEELPFVATAGDVLAASAADADPFFARAILGRPFDASLLTGELFPGHPVYQRPLADEAGPSAPTAARDPRDLAGGDGGSGPEDPAAPPARQADPGVLAPTLLTDATTGEPVPPRMWAWIHGLEELASDDAGGPTPNPAPALLPPPATDQSVPTSQYAPRPIGPAATARETRPSVPPQQNTGRVPVAPRDDPRPSPPTPSPPADAALPPPAFSGSAAAFSAAVPRVRRSRRTRAKSRAPRASAPPEGWRPPALPAPVAPVAASARPPDQPPTPESAPPAWVSALPLPPGPASARGAFPAPTLAPIPPPPAEGAVVPGGDRRRGRRQTTAGPSPTPPRGPAAGPPRRLTRPAVASLSASLNSLPSPRDPADHAAAVSAAAAAVPPSPGLAPPTSAVQTSPPPLAPGPVAPSEPLCGWVVPGGPVARRPPPQSPATKPAARTRIRARSVPQPPLPQPPLPQPPLPQPPLPQPPLPQPPLPQPPLPQPPLPQPPLPQPPLPQPPLPPVTRTLTPQSRDSVPTPESPTHTNTHLPVSAVTSWASSLALHVDSAPPPASLLQTLHISSDDEHSDADSLRFSDSDDTEALDPLPPEPHLPPADEPPGPLAADHLQSPHSQFGPLPVQANAVLSRRYVRSTGRSALAVLIRACRRIQQQLQRTRRALFQRSNAVLTSLHHVRMLLG</sequence>
<dbReference type="EC" id="3.4.19.12" evidence="2"/>
<dbReference type="EC" id="3.4.22.-" evidence="2"/>
<dbReference type="EMBL" id="Z86099">
    <property type="protein sequence ID" value="CAB06722.1"/>
    <property type="molecule type" value="Genomic_DNA"/>
</dbReference>
<dbReference type="PDB" id="6M6G">
    <property type="method" value="EM"/>
    <property type="resolution" value="5.39 A"/>
    <property type="chains" value="n/o=1-3122"/>
</dbReference>
<dbReference type="PDB" id="6M6H">
    <property type="method" value="EM"/>
    <property type="resolution" value="4.50 A"/>
    <property type="chains" value="P/Q=1-3122"/>
</dbReference>
<dbReference type="PDBsum" id="6M6G"/>
<dbReference type="PDBsum" id="6M6H"/>
<dbReference type="EMDB" id="EMD-30123"/>
<dbReference type="EMDB" id="EMD-30124"/>
<dbReference type="SMR" id="P89459"/>
<dbReference type="MEROPS" id="C76.001"/>
<dbReference type="Proteomes" id="UP000001874">
    <property type="component" value="Segment"/>
</dbReference>
<dbReference type="GO" id="GO:0030430">
    <property type="term" value="C:host cell cytoplasm"/>
    <property type="evidence" value="ECO:0007669"/>
    <property type="project" value="UniProtKB-SubCell"/>
</dbReference>
<dbReference type="GO" id="GO:0042025">
    <property type="term" value="C:host cell nucleus"/>
    <property type="evidence" value="ECO:0007669"/>
    <property type="project" value="UniProtKB-SubCell"/>
</dbReference>
<dbReference type="GO" id="GO:0019033">
    <property type="term" value="C:viral tegument"/>
    <property type="evidence" value="ECO:0007669"/>
    <property type="project" value="UniProtKB-SubCell"/>
</dbReference>
<dbReference type="GO" id="GO:0004843">
    <property type="term" value="F:cysteine-type deubiquitinase activity"/>
    <property type="evidence" value="ECO:0007669"/>
    <property type="project" value="UniProtKB-EC"/>
</dbReference>
<dbReference type="GO" id="GO:0019784">
    <property type="term" value="F:deNEDDylase activity"/>
    <property type="evidence" value="ECO:0007669"/>
    <property type="project" value="InterPro"/>
</dbReference>
<dbReference type="GO" id="GO:0006508">
    <property type="term" value="P:proteolysis"/>
    <property type="evidence" value="ECO:0007669"/>
    <property type="project" value="UniProtKB-KW"/>
</dbReference>
<dbReference type="GO" id="GO:0039648">
    <property type="term" value="P:symbiont-mediated perturbation of host ubiquitin-like protein modification"/>
    <property type="evidence" value="ECO:0007669"/>
    <property type="project" value="UniProtKB-KW"/>
</dbReference>
<dbReference type="GO" id="GO:0039693">
    <property type="term" value="P:viral DNA genome replication"/>
    <property type="evidence" value="ECO:0007669"/>
    <property type="project" value="InterPro"/>
</dbReference>
<dbReference type="FunFam" id="3.90.70.120:FF:000001">
    <property type="entry name" value="Large tegument protein"/>
    <property type="match status" value="1"/>
</dbReference>
<dbReference type="Gene3D" id="3.90.70.120">
    <property type="match status" value="1"/>
</dbReference>
<dbReference type="HAMAP" id="MF_04044">
    <property type="entry name" value="HSV_LTP"/>
    <property type="match status" value="1"/>
</dbReference>
<dbReference type="InterPro" id="IPR005210">
    <property type="entry name" value="Herpes_LT_deneddylase"/>
</dbReference>
<dbReference type="InterPro" id="IPR006928">
    <property type="entry name" value="Herpes_teg_USP"/>
</dbReference>
<dbReference type="InterPro" id="IPR034702">
    <property type="entry name" value="HSV_LTP"/>
</dbReference>
<dbReference type="InterPro" id="IPR038765">
    <property type="entry name" value="Papain-like_cys_pep_sf"/>
</dbReference>
<dbReference type="Pfam" id="PF04843">
    <property type="entry name" value="Herpes_teg_N"/>
    <property type="match status" value="1"/>
</dbReference>
<dbReference type="Pfam" id="PF03586">
    <property type="entry name" value="Herpes_UL36"/>
    <property type="match status" value="1"/>
</dbReference>
<dbReference type="SUPFAM" id="SSF54001">
    <property type="entry name" value="Cysteine proteinases"/>
    <property type="match status" value="1"/>
</dbReference>
<dbReference type="PROSITE" id="PS51521">
    <property type="entry name" value="HTUSP"/>
    <property type="match status" value="1"/>
</dbReference>
<feature type="chain" id="PRO_0000385478" description="Large tegument protein deneddylase">
    <location>
        <begin position="1"/>
        <end position="3122"/>
    </location>
</feature>
<feature type="domain" description="Peptidase C76" evidence="2">
    <location>
        <begin position="20"/>
        <end position="238"/>
    </location>
</feature>
<feature type="repeat" description="1">
    <location>
        <begin position="2891"/>
        <end position="2895"/>
    </location>
</feature>
<feature type="repeat" description="2">
    <location>
        <begin position="2896"/>
        <end position="2900"/>
    </location>
</feature>
<feature type="repeat" description="3">
    <location>
        <begin position="2901"/>
        <end position="2905"/>
    </location>
</feature>
<feature type="repeat" description="4">
    <location>
        <begin position="2906"/>
        <end position="2910"/>
    </location>
</feature>
<feature type="repeat" description="5">
    <location>
        <begin position="2911"/>
        <end position="2915"/>
    </location>
</feature>
<feature type="repeat" description="6">
    <location>
        <begin position="2916"/>
        <end position="2920"/>
    </location>
</feature>
<feature type="repeat" description="7">
    <location>
        <begin position="2921"/>
        <end position="2925"/>
    </location>
</feature>
<feature type="repeat" description="8">
    <location>
        <begin position="2926"/>
        <end position="2930"/>
    </location>
</feature>
<feature type="repeat" description="9">
    <location>
        <begin position="2931"/>
        <end position="2935"/>
    </location>
</feature>
<feature type="repeat" description="10">
    <location>
        <begin position="2936"/>
        <end position="2940"/>
    </location>
</feature>
<feature type="repeat" description="11">
    <location>
        <begin position="2941"/>
        <end position="2945"/>
    </location>
</feature>
<feature type="region of interest" description="Deubiquitination activity" evidence="2">
    <location>
        <begin position="1"/>
        <end position="248"/>
    </location>
</feature>
<feature type="region of interest" description="Disordered" evidence="3">
    <location>
        <begin position="281"/>
        <end position="367"/>
    </location>
</feature>
<feature type="region of interest" description="Disordered" evidence="3">
    <location>
        <begin position="387"/>
        <end position="496"/>
    </location>
</feature>
<feature type="region of interest" description="Interaction with inner tegument protein" evidence="2">
    <location>
        <begin position="548"/>
        <end position="578"/>
    </location>
</feature>
<feature type="region of interest" description="Disordered" evidence="3">
    <location>
        <begin position="2494"/>
        <end position="2539"/>
    </location>
</feature>
<feature type="region of interest" description="Disordered" evidence="3">
    <location>
        <begin position="2570"/>
        <end position="2974"/>
    </location>
</feature>
<feature type="region of interest" description="11 X 5 AA tandem repeats of P-Q-P-P-L">
    <location>
        <begin position="2891"/>
        <end position="2945"/>
    </location>
</feature>
<feature type="region of interest" description="Disordered" evidence="3">
    <location>
        <begin position="3006"/>
        <end position="3059"/>
    </location>
</feature>
<feature type="compositionally biased region" description="Low complexity" evidence="3">
    <location>
        <begin position="343"/>
        <end position="353"/>
    </location>
</feature>
<feature type="compositionally biased region" description="Basic residues" evidence="3">
    <location>
        <begin position="387"/>
        <end position="400"/>
    </location>
</feature>
<feature type="compositionally biased region" description="Basic residues" evidence="3">
    <location>
        <begin position="425"/>
        <end position="436"/>
    </location>
</feature>
<feature type="compositionally biased region" description="Low complexity" evidence="3">
    <location>
        <begin position="437"/>
        <end position="454"/>
    </location>
</feature>
<feature type="compositionally biased region" description="Pro residues" evidence="3">
    <location>
        <begin position="2578"/>
        <end position="2590"/>
    </location>
</feature>
<feature type="compositionally biased region" description="Pro residues" evidence="3">
    <location>
        <begin position="2637"/>
        <end position="2654"/>
    </location>
</feature>
<feature type="compositionally biased region" description="Low complexity" evidence="3">
    <location>
        <begin position="2655"/>
        <end position="2667"/>
    </location>
</feature>
<feature type="compositionally biased region" description="Basic residues" evidence="3">
    <location>
        <begin position="2668"/>
        <end position="2681"/>
    </location>
</feature>
<feature type="compositionally biased region" description="Pro residues" evidence="3">
    <location>
        <begin position="2690"/>
        <end position="2700"/>
    </location>
</feature>
<feature type="compositionally biased region" description="Pro residues" evidence="3">
    <location>
        <begin position="2710"/>
        <end position="2719"/>
    </location>
</feature>
<feature type="compositionally biased region" description="Low complexity" evidence="3">
    <location>
        <begin position="2734"/>
        <end position="2743"/>
    </location>
</feature>
<feature type="compositionally biased region" description="Pro residues" evidence="3">
    <location>
        <begin position="2744"/>
        <end position="2753"/>
    </location>
</feature>
<feature type="compositionally biased region" description="Pro residues" evidence="3">
    <location>
        <begin position="2775"/>
        <end position="2785"/>
    </location>
</feature>
<feature type="compositionally biased region" description="Low complexity" evidence="3">
    <location>
        <begin position="2786"/>
        <end position="2807"/>
    </location>
</feature>
<feature type="compositionally biased region" description="Low complexity" evidence="3">
    <location>
        <begin position="2814"/>
        <end position="2825"/>
    </location>
</feature>
<feature type="compositionally biased region" description="Pro residues" evidence="3">
    <location>
        <begin position="2841"/>
        <end position="2852"/>
    </location>
</feature>
<feature type="compositionally biased region" description="Low complexity" evidence="3">
    <location>
        <begin position="2853"/>
        <end position="2867"/>
    </location>
</feature>
<feature type="compositionally biased region" description="Pro residues" evidence="3">
    <location>
        <begin position="2891"/>
        <end position="2947"/>
    </location>
</feature>
<feature type="compositionally biased region" description="Polar residues" evidence="3">
    <location>
        <begin position="2950"/>
        <end position="2959"/>
    </location>
</feature>
<feature type="compositionally biased region" description="Polar residues" evidence="3">
    <location>
        <begin position="2965"/>
        <end position="2974"/>
    </location>
</feature>
<feature type="compositionally biased region" description="Basic and acidic residues" evidence="3">
    <location>
        <begin position="3006"/>
        <end position="3020"/>
    </location>
</feature>
<feature type="compositionally biased region" description="Pro residues" evidence="3">
    <location>
        <begin position="3029"/>
        <end position="3045"/>
    </location>
</feature>
<feature type="active site" evidence="2">
    <location>
        <position position="40"/>
    </location>
</feature>
<feature type="active site" evidence="2">
    <location>
        <position position="172"/>
    </location>
</feature>
<feature type="active site" evidence="2">
    <location>
        <position position="174"/>
    </location>
</feature>
<feature type="site" description="Important for catalytic activity" evidence="2">
    <location>
        <position position="27"/>
    </location>
</feature>
<name>LTP_HHV2H</name>
<keyword id="KW-0002">3D-structure</keyword>
<keyword id="KW-1035">Host cytoplasm</keyword>
<keyword id="KW-1048">Host nucleus</keyword>
<keyword id="KW-0945">Host-virus interaction</keyword>
<keyword id="KW-0378">Hydrolase</keyword>
<keyword id="KW-1127">Modulation of host ubiquitin pathway by viral deubiquitinase</keyword>
<keyword id="KW-1130">Modulation of host ubiquitin pathway by virus</keyword>
<keyword id="KW-0645">Protease</keyword>
<keyword id="KW-1185">Reference proteome</keyword>
<keyword id="KW-0677">Repeat</keyword>
<keyword id="KW-0788">Thiol protease</keyword>
<keyword id="KW-0833">Ubl conjugation pathway</keyword>
<keyword id="KW-0946">Virion</keyword>
<keyword id="KW-0920">Virion tegument</keyword>
<organismHost>
    <name type="scientific">Homo sapiens</name>
    <name type="common">Human</name>
    <dbReference type="NCBI Taxonomy" id="9606"/>
</organismHost>
<proteinExistence type="evidence at protein level"/>